<gene>
    <name evidence="1" type="primary">glyQ</name>
    <name type="ordered locus">XC_4178</name>
</gene>
<comment type="catalytic activity">
    <reaction evidence="1">
        <text>tRNA(Gly) + glycine + ATP = glycyl-tRNA(Gly) + AMP + diphosphate</text>
        <dbReference type="Rhea" id="RHEA:16013"/>
        <dbReference type="Rhea" id="RHEA-COMP:9664"/>
        <dbReference type="Rhea" id="RHEA-COMP:9683"/>
        <dbReference type="ChEBI" id="CHEBI:30616"/>
        <dbReference type="ChEBI" id="CHEBI:33019"/>
        <dbReference type="ChEBI" id="CHEBI:57305"/>
        <dbReference type="ChEBI" id="CHEBI:78442"/>
        <dbReference type="ChEBI" id="CHEBI:78522"/>
        <dbReference type="ChEBI" id="CHEBI:456215"/>
        <dbReference type="EC" id="6.1.1.14"/>
    </reaction>
</comment>
<comment type="subunit">
    <text evidence="1">Tetramer of two alpha and two beta subunits.</text>
</comment>
<comment type="subcellular location">
    <subcellularLocation>
        <location evidence="1">Cytoplasm</location>
    </subcellularLocation>
</comment>
<comment type="similarity">
    <text evidence="1">Belongs to the class-II aminoacyl-tRNA synthetase family.</text>
</comment>
<evidence type="ECO:0000255" key="1">
    <source>
        <dbReference type="HAMAP-Rule" id="MF_00254"/>
    </source>
</evidence>
<name>SYGA_XANC8</name>
<sequence length="302" mass="34404">MSDSRRVPITFQGLIQTLNQYWAEQGCVLIQPLDLEVGAGTFHPATFLRALGPEPWNAAYVQPSRRPTDGRYGENPNRLQRYYQYQVAMKPNPDNIQDLYLGSLKALGIDPLVHDLRFVEDNWESPTLGAWGLGWEVWLNGMEVTQFTYFQQAGGLECKPVLGEITYGLERLCMYLQSCDNVYDLVWTYGPDGTPVTYGDVYHQNEVEQSAYNFEHANVEELFHRFDACEAEAKHLVEVGLPLPAYEQVTKASHAFNLLDARRAISVTERQRYILRVRALAQGVAQAYYAQREKLGFPGVKK</sequence>
<proteinExistence type="inferred from homology"/>
<reference key="1">
    <citation type="journal article" date="2005" name="Genome Res.">
        <title>Comparative and functional genomic analyses of the pathogenicity of phytopathogen Xanthomonas campestris pv. campestris.</title>
        <authorList>
            <person name="Qian W."/>
            <person name="Jia Y."/>
            <person name="Ren S.-X."/>
            <person name="He Y.-Q."/>
            <person name="Feng J.-X."/>
            <person name="Lu L.-F."/>
            <person name="Sun Q."/>
            <person name="Ying G."/>
            <person name="Tang D.-J."/>
            <person name="Tang H."/>
            <person name="Wu W."/>
            <person name="Hao P."/>
            <person name="Wang L."/>
            <person name="Jiang B.-L."/>
            <person name="Zeng S."/>
            <person name="Gu W.-Y."/>
            <person name="Lu G."/>
            <person name="Rong L."/>
            <person name="Tian Y."/>
            <person name="Yao Z."/>
            <person name="Fu G."/>
            <person name="Chen B."/>
            <person name="Fang R."/>
            <person name="Qiang B."/>
            <person name="Chen Z."/>
            <person name="Zhao G.-P."/>
            <person name="Tang J.-L."/>
            <person name="He C."/>
        </authorList>
    </citation>
    <scope>NUCLEOTIDE SEQUENCE [LARGE SCALE GENOMIC DNA]</scope>
    <source>
        <strain>8004</strain>
    </source>
</reference>
<organism>
    <name type="scientific">Xanthomonas campestris pv. campestris (strain 8004)</name>
    <dbReference type="NCBI Taxonomy" id="314565"/>
    <lineage>
        <taxon>Bacteria</taxon>
        <taxon>Pseudomonadati</taxon>
        <taxon>Pseudomonadota</taxon>
        <taxon>Gammaproteobacteria</taxon>
        <taxon>Lysobacterales</taxon>
        <taxon>Lysobacteraceae</taxon>
        <taxon>Xanthomonas</taxon>
    </lineage>
</organism>
<feature type="chain" id="PRO_1000047530" description="Glycine--tRNA ligase alpha subunit">
    <location>
        <begin position="1"/>
        <end position="302"/>
    </location>
</feature>
<dbReference type="EC" id="6.1.1.14" evidence="1"/>
<dbReference type="EMBL" id="CP000050">
    <property type="protein sequence ID" value="AAY51216.1"/>
    <property type="molecule type" value="Genomic_DNA"/>
</dbReference>
<dbReference type="RefSeq" id="WP_011039156.1">
    <property type="nucleotide sequence ID" value="NZ_CP155948.1"/>
</dbReference>
<dbReference type="SMR" id="Q4UP07"/>
<dbReference type="KEGG" id="xcb:XC_4178"/>
<dbReference type="HOGENOM" id="CLU_057066_1_0_6"/>
<dbReference type="Proteomes" id="UP000000420">
    <property type="component" value="Chromosome"/>
</dbReference>
<dbReference type="GO" id="GO:0005829">
    <property type="term" value="C:cytosol"/>
    <property type="evidence" value="ECO:0007669"/>
    <property type="project" value="TreeGrafter"/>
</dbReference>
<dbReference type="GO" id="GO:0005524">
    <property type="term" value="F:ATP binding"/>
    <property type="evidence" value="ECO:0007669"/>
    <property type="project" value="UniProtKB-UniRule"/>
</dbReference>
<dbReference type="GO" id="GO:0004820">
    <property type="term" value="F:glycine-tRNA ligase activity"/>
    <property type="evidence" value="ECO:0007669"/>
    <property type="project" value="UniProtKB-UniRule"/>
</dbReference>
<dbReference type="GO" id="GO:0006426">
    <property type="term" value="P:glycyl-tRNA aminoacylation"/>
    <property type="evidence" value="ECO:0007669"/>
    <property type="project" value="UniProtKB-UniRule"/>
</dbReference>
<dbReference type="CDD" id="cd00733">
    <property type="entry name" value="GlyRS_alpha_core"/>
    <property type="match status" value="1"/>
</dbReference>
<dbReference type="FunFam" id="3.30.930.10:FF:000006">
    <property type="entry name" value="Glycine--tRNA ligase alpha subunit"/>
    <property type="match status" value="1"/>
</dbReference>
<dbReference type="Gene3D" id="3.30.930.10">
    <property type="entry name" value="Bira Bifunctional Protein, Domain 2"/>
    <property type="match status" value="1"/>
</dbReference>
<dbReference type="Gene3D" id="1.20.58.180">
    <property type="entry name" value="Class II aaRS and biotin synthetases, domain 2"/>
    <property type="match status" value="1"/>
</dbReference>
<dbReference type="HAMAP" id="MF_00254">
    <property type="entry name" value="Gly_tRNA_synth_alpha"/>
    <property type="match status" value="1"/>
</dbReference>
<dbReference type="InterPro" id="IPR045864">
    <property type="entry name" value="aa-tRNA-synth_II/BPL/LPL"/>
</dbReference>
<dbReference type="InterPro" id="IPR006194">
    <property type="entry name" value="Gly-tRNA-synth_heterodimer"/>
</dbReference>
<dbReference type="InterPro" id="IPR002310">
    <property type="entry name" value="Gly-tRNA_ligase_asu"/>
</dbReference>
<dbReference type="NCBIfam" id="TIGR00388">
    <property type="entry name" value="glyQ"/>
    <property type="match status" value="1"/>
</dbReference>
<dbReference type="NCBIfam" id="NF006827">
    <property type="entry name" value="PRK09348.1"/>
    <property type="match status" value="1"/>
</dbReference>
<dbReference type="PANTHER" id="PTHR30075:SF2">
    <property type="entry name" value="GLYCINE--TRNA LIGASE, CHLOROPLASTIC_MITOCHONDRIAL 2"/>
    <property type="match status" value="1"/>
</dbReference>
<dbReference type="PANTHER" id="PTHR30075">
    <property type="entry name" value="GLYCYL-TRNA SYNTHETASE"/>
    <property type="match status" value="1"/>
</dbReference>
<dbReference type="Pfam" id="PF02091">
    <property type="entry name" value="tRNA-synt_2e"/>
    <property type="match status" value="1"/>
</dbReference>
<dbReference type="PRINTS" id="PR01044">
    <property type="entry name" value="TRNASYNTHGA"/>
</dbReference>
<dbReference type="SUPFAM" id="SSF55681">
    <property type="entry name" value="Class II aaRS and biotin synthetases"/>
    <property type="match status" value="1"/>
</dbReference>
<dbReference type="PROSITE" id="PS50861">
    <property type="entry name" value="AA_TRNA_LIGASE_II_GLYAB"/>
    <property type="match status" value="1"/>
</dbReference>
<keyword id="KW-0030">Aminoacyl-tRNA synthetase</keyword>
<keyword id="KW-0067">ATP-binding</keyword>
<keyword id="KW-0963">Cytoplasm</keyword>
<keyword id="KW-0436">Ligase</keyword>
<keyword id="KW-0547">Nucleotide-binding</keyword>
<keyword id="KW-0648">Protein biosynthesis</keyword>
<accession>Q4UP07</accession>
<protein>
    <recommendedName>
        <fullName evidence="1">Glycine--tRNA ligase alpha subunit</fullName>
        <ecNumber evidence="1">6.1.1.14</ecNumber>
    </recommendedName>
    <alternativeName>
        <fullName evidence="1">Glycyl-tRNA synthetase alpha subunit</fullName>
        <shortName evidence="1">GlyRS</shortName>
    </alternativeName>
</protein>